<feature type="chain" id="PRO_1000196336" description="Small ribosomal subunit protein bS16">
    <location>
        <begin position="1"/>
        <end position="90"/>
    </location>
</feature>
<evidence type="ECO:0000255" key="1">
    <source>
        <dbReference type="HAMAP-Rule" id="MF_00385"/>
    </source>
</evidence>
<evidence type="ECO:0000305" key="2"/>
<protein>
    <recommendedName>
        <fullName evidence="1">Small ribosomal subunit protein bS16</fullName>
    </recommendedName>
    <alternativeName>
        <fullName evidence="2">30S ribosomal protein S16</fullName>
    </alternativeName>
</protein>
<gene>
    <name evidence="1" type="primary">rpsP</name>
    <name type="ordered locus">BcerKBAB4_3667</name>
</gene>
<name>RS16_BACMK</name>
<dbReference type="EMBL" id="CP000903">
    <property type="protein sequence ID" value="ABY44838.1"/>
    <property type="molecule type" value="Genomic_DNA"/>
</dbReference>
<dbReference type="RefSeq" id="WP_000268750.1">
    <property type="nucleotide sequence ID" value="NC_010184.1"/>
</dbReference>
<dbReference type="SMR" id="A9VT82"/>
<dbReference type="GeneID" id="93007268"/>
<dbReference type="KEGG" id="bwe:BcerKBAB4_3667"/>
<dbReference type="eggNOG" id="COG0228">
    <property type="taxonomic scope" value="Bacteria"/>
</dbReference>
<dbReference type="HOGENOM" id="CLU_100590_5_0_9"/>
<dbReference type="Proteomes" id="UP000002154">
    <property type="component" value="Chromosome"/>
</dbReference>
<dbReference type="GO" id="GO:0005737">
    <property type="term" value="C:cytoplasm"/>
    <property type="evidence" value="ECO:0007669"/>
    <property type="project" value="UniProtKB-ARBA"/>
</dbReference>
<dbReference type="GO" id="GO:0015935">
    <property type="term" value="C:small ribosomal subunit"/>
    <property type="evidence" value="ECO:0007669"/>
    <property type="project" value="TreeGrafter"/>
</dbReference>
<dbReference type="GO" id="GO:0003735">
    <property type="term" value="F:structural constituent of ribosome"/>
    <property type="evidence" value="ECO:0007669"/>
    <property type="project" value="InterPro"/>
</dbReference>
<dbReference type="GO" id="GO:0006412">
    <property type="term" value="P:translation"/>
    <property type="evidence" value="ECO:0007669"/>
    <property type="project" value="UniProtKB-UniRule"/>
</dbReference>
<dbReference type="FunFam" id="3.30.1320.10:FF:000002">
    <property type="entry name" value="30S ribosomal protein S16"/>
    <property type="match status" value="1"/>
</dbReference>
<dbReference type="Gene3D" id="3.30.1320.10">
    <property type="match status" value="1"/>
</dbReference>
<dbReference type="HAMAP" id="MF_00385">
    <property type="entry name" value="Ribosomal_bS16"/>
    <property type="match status" value="1"/>
</dbReference>
<dbReference type="InterPro" id="IPR000307">
    <property type="entry name" value="Ribosomal_bS16"/>
</dbReference>
<dbReference type="InterPro" id="IPR020592">
    <property type="entry name" value="Ribosomal_bS16_CS"/>
</dbReference>
<dbReference type="InterPro" id="IPR023803">
    <property type="entry name" value="Ribosomal_bS16_dom_sf"/>
</dbReference>
<dbReference type="NCBIfam" id="TIGR00002">
    <property type="entry name" value="S16"/>
    <property type="match status" value="1"/>
</dbReference>
<dbReference type="PANTHER" id="PTHR12919">
    <property type="entry name" value="30S RIBOSOMAL PROTEIN S16"/>
    <property type="match status" value="1"/>
</dbReference>
<dbReference type="PANTHER" id="PTHR12919:SF20">
    <property type="entry name" value="SMALL RIBOSOMAL SUBUNIT PROTEIN BS16M"/>
    <property type="match status" value="1"/>
</dbReference>
<dbReference type="Pfam" id="PF00886">
    <property type="entry name" value="Ribosomal_S16"/>
    <property type="match status" value="1"/>
</dbReference>
<dbReference type="SUPFAM" id="SSF54565">
    <property type="entry name" value="Ribosomal protein S16"/>
    <property type="match status" value="1"/>
</dbReference>
<dbReference type="PROSITE" id="PS00732">
    <property type="entry name" value="RIBOSOMAL_S16"/>
    <property type="match status" value="1"/>
</dbReference>
<organism>
    <name type="scientific">Bacillus mycoides (strain KBAB4)</name>
    <name type="common">Bacillus weihenstephanensis</name>
    <dbReference type="NCBI Taxonomy" id="315730"/>
    <lineage>
        <taxon>Bacteria</taxon>
        <taxon>Bacillati</taxon>
        <taxon>Bacillota</taxon>
        <taxon>Bacilli</taxon>
        <taxon>Bacillales</taxon>
        <taxon>Bacillaceae</taxon>
        <taxon>Bacillus</taxon>
        <taxon>Bacillus cereus group</taxon>
    </lineage>
</organism>
<sequence length="90" mass="10118">MAVKIRLKRMGAKKTPFYRVVVADSRSPRDGRFIEEIGTYNPVAQPAEVKINEEAALKWLGNGAKPSDTVRNLFSNQGIMEKFHLSKQGK</sequence>
<accession>A9VT82</accession>
<proteinExistence type="inferred from homology"/>
<comment type="similarity">
    <text evidence="1">Belongs to the bacterial ribosomal protein bS16 family.</text>
</comment>
<keyword id="KW-0687">Ribonucleoprotein</keyword>
<keyword id="KW-0689">Ribosomal protein</keyword>
<reference key="1">
    <citation type="journal article" date="2008" name="Chem. Biol. Interact.">
        <title>Extending the Bacillus cereus group genomics to putative food-borne pathogens of different toxicity.</title>
        <authorList>
            <person name="Lapidus A."/>
            <person name="Goltsman E."/>
            <person name="Auger S."/>
            <person name="Galleron N."/>
            <person name="Segurens B."/>
            <person name="Dossat C."/>
            <person name="Land M.L."/>
            <person name="Broussolle V."/>
            <person name="Brillard J."/>
            <person name="Guinebretiere M.-H."/>
            <person name="Sanchis V."/>
            <person name="Nguen-the C."/>
            <person name="Lereclus D."/>
            <person name="Richardson P."/>
            <person name="Wincker P."/>
            <person name="Weissenbach J."/>
            <person name="Ehrlich S.D."/>
            <person name="Sorokin A."/>
        </authorList>
    </citation>
    <scope>NUCLEOTIDE SEQUENCE [LARGE SCALE GENOMIC DNA]</scope>
    <source>
        <strain>KBAB4</strain>
    </source>
</reference>